<organism>
    <name type="scientific">Bradyrhizobium diazoefficiens (strain JCM 10833 / BCRC 13528 / IAM 13628 / NBRC 14792 / USDA 110)</name>
    <dbReference type="NCBI Taxonomy" id="224911"/>
    <lineage>
        <taxon>Bacteria</taxon>
        <taxon>Pseudomonadati</taxon>
        <taxon>Pseudomonadota</taxon>
        <taxon>Alphaproteobacteria</taxon>
        <taxon>Hyphomicrobiales</taxon>
        <taxon>Nitrobacteraceae</taxon>
        <taxon>Bradyrhizobium</taxon>
    </lineage>
</organism>
<proteinExistence type="inferred from homology"/>
<keyword id="KW-0028">Amino-acid biosynthesis</keyword>
<keyword id="KW-0100">Branched-chain amino acid biosynthesis</keyword>
<keyword id="KW-0963">Cytoplasm</keyword>
<keyword id="KW-0432">Leucine biosynthesis</keyword>
<keyword id="KW-0460">Magnesium</keyword>
<keyword id="KW-0464">Manganese</keyword>
<keyword id="KW-0479">Metal-binding</keyword>
<keyword id="KW-0520">NAD</keyword>
<keyword id="KW-0560">Oxidoreductase</keyword>
<keyword id="KW-1185">Reference proteome</keyword>
<accession>Q89XA0</accession>
<feature type="chain" id="PRO_0000250104" description="3-isopropylmalate dehydrogenase 1">
    <location>
        <begin position="1"/>
        <end position="379"/>
    </location>
</feature>
<feature type="binding site" evidence="1">
    <location>
        <position position="101"/>
    </location>
    <ligand>
        <name>substrate</name>
    </ligand>
</feature>
<feature type="binding site" evidence="1">
    <location>
        <position position="111"/>
    </location>
    <ligand>
        <name>substrate</name>
    </ligand>
</feature>
<feature type="binding site" evidence="1">
    <location>
        <position position="139"/>
    </location>
    <ligand>
        <name>substrate</name>
    </ligand>
</feature>
<feature type="binding site" evidence="1">
    <location>
        <position position="230"/>
    </location>
    <ligand>
        <name>Mg(2+)</name>
        <dbReference type="ChEBI" id="CHEBI:18420"/>
    </ligand>
</feature>
<feature type="binding site" evidence="1">
    <location>
        <position position="230"/>
    </location>
    <ligand>
        <name>substrate</name>
    </ligand>
</feature>
<feature type="binding site" evidence="1">
    <location>
        <position position="254"/>
    </location>
    <ligand>
        <name>Mg(2+)</name>
        <dbReference type="ChEBI" id="CHEBI:18420"/>
    </ligand>
</feature>
<feature type="binding site" evidence="1">
    <location>
        <position position="258"/>
    </location>
    <ligand>
        <name>Mg(2+)</name>
        <dbReference type="ChEBI" id="CHEBI:18420"/>
    </ligand>
</feature>
<feature type="binding site" evidence="1">
    <location>
        <begin position="293"/>
        <end position="305"/>
    </location>
    <ligand>
        <name>NAD(+)</name>
        <dbReference type="ChEBI" id="CHEBI:57540"/>
    </ligand>
</feature>
<feature type="site" description="Important for catalysis" evidence="1">
    <location>
        <position position="146"/>
    </location>
</feature>
<feature type="site" description="Important for catalysis" evidence="1">
    <location>
        <position position="197"/>
    </location>
</feature>
<comment type="function">
    <text evidence="1">Catalyzes the oxidation of 3-carboxy-2-hydroxy-4-methylpentanoate (3-isopropylmalate) to 3-carboxy-4-methyl-2-oxopentanoate. The product decarboxylates to 4-methyl-2 oxopentanoate.</text>
</comment>
<comment type="catalytic activity">
    <reaction evidence="1">
        <text>(2R,3S)-3-isopropylmalate + NAD(+) = 4-methyl-2-oxopentanoate + CO2 + NADH</text>
        <dbReference type="Rhea" id="RHEA:32271"/>
        <dbReference type="ChEBI" id="CHEBI:16526"/>
        <dbReference type="ChEBI" id="CHEBI:17865"/>
        <dbReference type="ChEBI" id="CHEBI:35121"/>
        <dbReference type="ChEBI" id="CHEBI:57540"/>
        <dbReference type="ChEBI" id="CHEBI:57945"/>
        <dbReference type="EC" id="1.1.1.85"/>
    </reaction>
</comment>
<comment type="cofactor">
    <cofactor evidence="1">
        <name>Mg(2+)</name>
        <dbReference type="ChEBI" id="CHEBI:18420"/>
    </cofactor>
    <cofactor evidence="1">
        <name>Mn(2+)</name>
        <dbReference type="ChEBI" id="CHEBI:29035"/>
    </cofactor>
    <text evidence="1">Binds 1 Mg(2+) or Mn(2+) ion per subunit.</text>
</comment>
<comment type="pathway">
    <text evidence="1">Amino-acid biosynthesis; L-leucine biosynthesis; L-leucine from 3-methyl-2-oxobutanoate: step 3/4.</text>
</comment>
<comment type="subunit">
    <text evidence="1">Homodimer.</text>
</comment>
<comment type="subcellular location">
    <subcellularLocation>
        <location evidence="1">Cytoplasm</location>
    </subcellularLocation>
</comment>
<comment type="similarity">
    <text evidence="1">Belongs to the isocitrate and isopropylmalate dehydrogenases family. LeuB type 1 subfamily.</text>
</comment>
<comment type="sequence caution" evidence="2">
    <conflict type="erroneous initiation">
        <sequence resource="EMBL-CDS" id="BAC45679"/>
    </conflict>
</comment>
<reference key="1">
    <citation type="journal article" date="2002" name="DNA Res.">
        <title>Complete genomic sequence of nitrogen-fixing symbiotic bacterium Bradyrhizobium japonicum USDA110.</title>
        <authorList>
            <person name="Kaneko T."/>
            <person name="Nakamura Y."/>
            <person name="Sato S."/>
            <person name="Minamisawa K."/>
            <person name="Uchiumi T."/>
            <person name="Sasamoto S."/>
            <person name="Watanabe A."/>
            <person name="Idesawa K."/>
            <person name="Iriguchi M."/>
            <person name="Kawashima K."/>
            <person name="Kohara M."/>
            <person name="Matsumoto M."/>
            <person name="Shimpo S."/>
            <person name="Tsuruoka H."/>
            <person name="Wada T."/>
            <person name="Yamada M."/>
            <person name="Tabata S."/>
        </authorList>
    </citation>
    <scope>NUCLEOTIDE SEQUENCE [LARGE SCALE GENOMIC DNA]</scope>
    <source>
        <strain>JCM 10833 / BCRC 13528 / IAM 13628 / NBRC 14792 / USDA 110</strain>
    </source>
</reference>
<sequence>MNTLSNTITVAVVGGEGIGPEVTDQSHRILKWFSDRRGAPVILREAQYGLIPYLATGKVLPDDTVEAMEEADAILWGATGGPETTEVPPAARKAGSLLSLRSKYDLYANLRPIVANPALADSAPLKAAVLKDVDFIIIRELTSGIYFGEPRGIETLPDGQRRGFNTQQYTTSQIRRVARTAFELARTRKGRVCSVDKANVLETSVLWREEVTALHEAEFSDVELTHLYVDNAAMQIVRAPSQFDVMVTCNIFGDILSDCAAMASGSLGMLPSVSLGPPDRLGRRKALYEPVHGSAPDIAGKGIANPLGSILSVAMMLRITLHRPEDAALLEKAVDTALAAGARTADIAEPGAKRLSTQEMGDAVLNALDKVVGKEREHA</sequence>
<evidence type="ECO:0000255" key="1">
    <source>
        <dbReference type="HAMAP-Rule" id="MF_01033"/>
    </source>
</evidence>
<evidence type="ECO:0000305" key="2"/>
<gene>
    <name evidence="1" type="primary">leuB1</name>
    <name type="ordered locus">bll0414</name>
</gene>
<dbReference type="EC" id="1.1.1.85" evidence="1"/>
<dbReference type="EMBL" id="BA000040">
    <property type="protein sequence ID" value="BAC45679.1"/>
    <property type="status" value="ALT_INIT"/>
    <property type="molecule type" value="Genomic_DNA"/>
</dbReference>
<dbReference type="RefSeq" id="NP_767054.1">
    <property type="nucleotide sequence ID" value="NC_004463.1"/>
</dbReference>
<dbReference type="RefSeq" id="WP_038965045.1">
    <property type="nucleotide sequence ID" value="NC_004463.1"/>
</dbReference>
<dbReference type="SMR" id="Q89XA0"/>
<dbReference type="STRING" id="224911.AAV28_41315"/>
<dbReference type="EnsemblBacteria" id="BAC45679">
    <property type="protein sequence ID" value="BAC45679"/>
    <property type="gene ID" value="BAC45679"/>
</dbReference>
<dbReference type="GeneID" id="46495559"/>
<dbReference type="KEGG" id="bja:bll0414"/>
<dbReference type="PATRIC" id="fig|224911.44.peg.8944"/>
<dbReference type="eggNOG" id="COG0473">
    <property type="taxonomic scope" value="Bacteria"/>
</dbReference>
<dbReference type="HOGENOM" id="CLU_031953_0_3_5"/>
<dbReference type="InParanoid" id="Q89XA0"/>
<dbReference type="OrthoDB" id="9767905at2"/>
<dbReference type="UniPathway" id="UPA00048">
    <property type="reaction ID" value="UER00072"/>
</dbReference>
<dbReference type="Proteomes" id="UP000002526">
    <property type="component" value="Chromosome"/>
</dbReference>
<dbReference type="GO" id="GO:0005829">
    <property type="term" value="C:cytosol"/>
    <property type="evidence" value="ECO:0000318"/>
    <property type="project" value="GO_Central"/>
</dbReference>
<dbReference type="GO" id="GO:0003862">
    <property type="term" value="F:3-isopropylmalate dehydrogenase activity"/>
    <property type="evidence" value="ECO:0000318"/>
    <property type="project" value="GO_Central"/>
</dbReference>
<dbReference type="GO" id="GO:0000287">
    <property type="term" value="F:magnesium ion binding"/>
    <property type="evidence" value="ECO:0007669"/>
    <property type="project" value="InterPro"/>
</dbReference>
<dbReference type="GO" id="GO:0051287">
    <property type="term" value="F:NAD binding"/>
    <property type="evidence" value="ECO:0007669"/>
    <property type="project" value="InterPro"/>
</dbReference>
<dbReference type="GO" id="GO:0009098">
    <property type="term" value="P:L-leucine biosynthetic process"/>
    <property type="evidence" value="ECO:0000318"/>
    <property type="project" value="GO_Central"/>
</dbReference>
<dbReference type="FunFam" id="3.40.718.10:FF:000006">
    <property type="entry name" value="3-isopropylmalate dehydrogenase"/>
    <property type="match status" value="1"/>
</dbReference>
<dbReference type="Gene3D" id="3.40.718.10">
    <property type="entry name" value="Isopropylmalate Dehydrogenase"/>
    <property type="match status" value="1"/>
</dbReference>
<dbReference type="HAMAP" id="MF_01033">
    <property type="entry name" value="LeuB_type1"/>
    <property type="match status" value="1"/>
</dbReference>
<dbReference type="InterPro" id="IPR019818">
    <property type="entry name" value="IsoCit/isopropylmalate_DH_CS"/>
</dbReference>
<dbReference type="InterPro" id="IPR024084">
    <property type="entry name" value="IsoPropMal-DH-like_dom"/>
</dbReference>
<dbReference type="InterPro" id="IPR004429">
    <property type="entry name" value="Isopropylmalate_DH"/>
</dbReference>
<dbReference type="NCBIfam" id="TIGR00169">
    <property type="entry name" value="leuB"/>
    <property type="match status" value="1"/>
</dbReference>
<dbReference type="PANTHER" id="PTHR42979">
    <property type="entry name" value="3-ISOPROPYLMALATE DEHYDROGENASE"/>
    <property type="match status" value="1"/>
</dbReference>
<dbReference type="PANTHER" id="PTHR42979:SF1">
    <property type="entry name" value="3-ISOPROPYLMALATE DEHYDROGENASE"/>
    <property type="match status" value="1"/>
</dbReference>
<dbReference type="Pfam" id="PF00180">
    <property type="entry name" value="Iso_dh"/>
    <property type="match status" value="1"/>
</dbReference>
<dbReference type="SMART" id="SM01329">
    <property type="entry name" value="Iso_dh"/>
    <property type="match status" value="1"/>
</dbReference>
<dbReference type="SUPFAM" id="SSF53659">
    <property type="entry name" value="Isocitrate/Isopropylmalate dehydrogenase-like"/>
    <property type="match status" value="1"/>
</dbReference>
<dbReference type="PROSITE" id="PS00470">
    <property type="entry name" value="IDH_IMDH"/>
    <property type="match status" value="1"/>
</dbReference>
<name>LEU31_BRADU</name>
<protein>
    <recommendedName>
        <fullName evidence="1">3-isopropylmalate dehydrogenase 1</fullName>
        <ecNumber evidence="1">1.1.1.85</ecNumber>
    </recommendedName>
    <alternativeName>
        <fullName evidence="1">3-IPM-DH 1</fullName>
    </alternativeName>
    <alternativeName>
        <fullName evidence="1">Beta-IPM dehydrogenase 1</fullName>
        <shortName evidence="1">IMDH 1</shortName>
    </alternativeName>
</protein>